<proteinExistence type="inferred from homology"/>
<keyword id="KW-0963">Cytoplasm</keyword>
<keyword id="KW-0488">Methylation</keyword>
<keyword id="KW-0648">Protein biosynthesis</keyword>
<comment type="function">
    <text evidence="1">Peptide chain release factor 1 directs the termination of translation in response to the peptide chain termination codons UAG and UAA.</text>
</comment>
<comment type="subcellular location">
    <subcellularLocation>
        <location evidence="1">Cytoplasm</location>
    </subcellularLocation>
</comment>
<comment type="PTM">
    <text evidence="1">Methylated by PrmC. Methylation increases the termination efficiency of RF1.</text>
</comment>
<comment type="similarity">
    <text evidence="1">Belongs to the prokaryotic/mitochondrial release factor family.</text>
</comment>
<sequence length="355" mass="39879">MLASKLDPFLKRFEELNSLLSSSDIINDISKMTTLSKEQKNLEPIVLKAKEYLKTLDNIEENKALLNDPELGELAKEELKTLEELKPKLEEEIKILLLPKDPNDERNIFLEIRAGAGGDEASLFVGDLVKAYARYAENRGYKLEIVSSSEGSVGGFKEIIMLVKGTGAYSRLKYEGGTHRVQRVPQTESQGRVHTSAITVAVMPEVDDIEIEINPNDLKVDVMRSSGHGGQSVNTTDSAVRITHIPTGIVVVNQDGKSQHKNKESAMKVLKARLYEMQESERLAKESEARKSQVGSGDRSERIRTYNFPQNRISDHRINLTLYRLDAIMQDGLFDEIIEPLITHHQAQALQEQNL</sequence>
<gene>
    <name evidence="1" type="primary">prfA</name>
    <name type="ordered locus">CJE1784</name>
</gene>
<feature type="chain" id="PRO_0000177652" description="Peptide chain release factor 1">
    <location>
        <begin position="1"/>
        <end position="355"/>
    </location>
</feature>
<feature type="region of interest" description="Disordered" evidence="2">
    <location>
        <begin position="280"/>
        <end position="303"/>
    </location>
</feature>
<feature type="compositionally biased region" description="Basic and acidic residues" evidence="2">
    <location>
        <begin position="280"/>
        <end position="291"/>
    </location>
</feature>
<feature type="modified residue" description="N5-methylglutamine" evidence="1">
    <location>
        <position position="231"/>
    </location>
</feature>
<organism>
    <name type="scientific">Campylobacter jejuni (strain RM1221)</name>
    <dbReference type="NCBI Taxonomy" id="195099"/>
    <lineage>
        <taxon>Bacteria</taxon>
        <taxon>Pseudomonadati</taxon>
        <taxon>Campylobacterota</taxon>
        <taxon>Epsilonproteobacteria</taxon>
        <taxon>Campylobacterales</taxon>
        <taxon>Campylobacteraceae</taxon>
        <taxon>Campylobacter</taxon>
    </lineage>
</organism>
<dbReference type="EMBL" id="CP000025">
    <property type="protein sequence ID" value="AAW36208.1"/>
    <property type="molecule type" value="Genomic_DNA"/>
</dbReference>
<dbReference type="RefSeq" id="WP_002868299.1">
    <property type="nucleotide sequence ID" value="NC_003912.7"/>
</dbReference>
<dbReference type="SMR" id="Q5HSH9"/>
<dbReference type="KEGG" id="cjr:CJE1784"/>
<dbReference type="HOGENOM" id="CLU_036856_0_1_7"/>
<dbReference type="GO" id="GO:0005737">
    <property type="term" value="C:cytoplasm"/>
    <property type="evidence" value="ECO:0007669"/>
    <property type="project" value="UniProtKB-SubCell"/>
</dbReference>
<dbReference type="GO" id="GO:0016149">
    <property type="term" value="F:translation release factor activity, codon specific"/>
    <property type="evidence" value="ECO:0007669"/>
    <property type="project" value="UniProtKB-UniRule"/>
</dbReference>
<dbReference type="FunFam" id="3.30.160.20:FF:000004">
    <property type="entry name" value="Peptide chain release factor 1"/>
    <property type="match status" value="1"/>
</dbReference>
<dbReference type="FunFam" id="3.30.70.1660:FF:000002">
    <property type="entry name" value="Peptide chain release factor 1"/>
    <property type="match status" value="1"/>
</dbReference>
<dbReference type="FunFam" id="3.30.70.1660:FF:000004">
    <property type="entry name" value="Peptide chain release factor 1"/>
    <property type="match status" value="1"/>
</dbReference>
<dbReference type="Gene3D" id="3.30.160.20">
    <property type="match status" value="1"/>
</dbReference>
<dbReference type="Gene3D" id="3.30.70.1660">
    <property type="match status" value="1"/>
</dbReference>
<dbReference type="Gene3D" id="6.10.140.1950">
    <property type="match status" value="1"/>
</dbReference>
<dbReference type="HAMAP" id="MF_00093">
    <property type="entry name" value="Rel_fac_1"/>
    <property type="match status" value="1"/>
</dbReference>
<dbReference type="InterPro" id="IPR005139">
    <property type="entry name" value="PCRF"/>
</dbReference>
<dbReference type="InterPro" id="IPR000352">
    <property type="entry name" value="Pep_chain_release_fac_I"/>
</dbReference>
<dbReference type="InterPro" id="IPR045853">
    <property type="entry name" value="Pep_chain_release_fac_I_sf"/>
</dbReference>
<dbReference type="InterPro" id="IPR050057">
    <property type="entry name" value="Prokaryotic/Mito_RF"/>
</dbReference>
<dbReference type="InterPro" id="IPR004373">
    <property type="entry name" value="RF-1"/>
</dbReference>
<dbReference type="NCBIfam" id="TIGR00019">
    <property type="entry name" value="prfA"/>
    <property type="match status" value="1"/>
</dbReference>
<dbReference type="NCBIfam" id="NF001859">
    <property type="entry name" value="PRK00591.1"/>
    <property type="match status" value="1"/>
</dbReference>
<dbReference type="PANTHER" id="PTHR43804">
    <property type="entry name" value="LD18447P"/>
    <property type="match status" value="1"/>
</dbReference>
<dbReference type="PANTHER" id="PTHR43804:SF7">
    <property type="entry name" value="LD18447P"/>
    <property type="match status" value="1"/>
</dbReference>
<dbReference type="Pfam" id="PF03462">
    <property type="entry name" value="PCRF"/>
    <property type="match status" value="1"/>
</dbReference>
<dbReference type="Pfam" id="PF00472">
    <property type="entry name" value="RF-1"/>
    <property type="match status" value="1"/>
</dbReference>
<dbReference type="SMART" id="SM00937">
    <property type="entry name" value="PCRF"/>
    <property type="match status" value="1"/>
</dbReference>
<dbReference type="SUPFAM" id="SSF75620">
    <property type="entry name" value="Release factor"/>
    <property type="match status" value="1"/>
</dbReference>
<dbReference type="PROSITE" id="PS00745">
    <property type="entry name" value="RF_PROK_I"/>
    <property type="match status" value="1"/>
</dbReference>
<accession>Q5HSH9</accession>
<name>RF1_CAMJR</name>
<protein>
    <recommendedName>
        <fullName evidence="1">Peptide chain release factor 1</fullName>
        <shortName evidence="1">RF-1</shortName>
    </recommendedName>
</protein>
<reference key="1">
    <citation type="journal article" date="2005" name="PLoS Biol.">
        <title>Major structural differences and novel potential virulence mechanisms from the genomes of multiple Campylobacter species.</title>
        <authorList>
            <person name="Fouts D.E."/>
            <person name="Mongodin E.F."/>
            <person name="Mandrell R.E."/>
            <person name="Miller W.G."/>
            <person name="Rasko D.A."/>
            <person name="Ravel J."/>
            <person name="Brinkac L.M."/>
            <person name="DeBoy R.T."/>
            <person name="Parker C.T."/>
            <person name="Daugherty S.C."/>
            <person name="Dodson R.J."/>
            <person name="Durkin A.S."/>
            <person name="Madupu R."/>
            <person name="Sullivan S.A."/>
            <person name="Shetty J.U."/>
            <person name="Ayodeji M.A."/>
            <person name="Shvartsbeyn A."/>
            <person name="Schatz M.C."/>
            <person name="Badger J.H."/>
            <person name="Fraser C.M."/>
            <person name="Nelson K.E."/>
        </authorList>
    </citation>
    <scope>NUCLEOTIDE SEQUENCE [LARGE SCALE GENOMIC DNA]</scope>
    <source>
        <strain>RM1221</strain>
    </source>
</reference>
<evidence type="ECO:0000255" key="1">
    <source>
        <dbReference type="HAMAP-Rule" id="MF_00093"/>
    </source>
</evidence>
<evidence type="ECO:0000256" key="2">
    <source>
        <dbReference type="SAM" id="MobiDB-lite"/>
    </source>
</evidence>